<dbReference type="EMBL" id="CP000282">
    <property type="protein sequence ID" value="ABD80842.1"/>
    <property type="molecule type" value="Genomic_DNA"/>
</dbReference>
<dbReference type="RefSeq" id="WP_011468062.1">
    <property type="nucleotide sequence ID" value="NC_007912.1"/>
</dbReference>
<dbReference type="SMR" id="Q21KD7"/>
<dbReference type="STRING" id="203122.Sde_1580"/>
<dbReference type="GeneID" id="98613256"/>
<dbReference type="KEGG" id="sde:Sde_1580"/>
<dbReference type="eggNOG" id="COG0292">
    <property type="taxonomic scope" value="Bacteria"/>
</dbReference>
<dbReference type="HOGENOM" id="CLU_123265_0_1_6"/>
<dbReference type="OrthoDB" id="9808966at2"/>
<dbReference type="Proteomes" id="UP000001947">
    <property type="component" value="Chromosome"/>
</dbReference>
<dbReference type="GO" id="GO:1990904">
    <property type="term" value="C:ribonucleoprotein complex"/>
    <property type="evidence" value="ECO:0007669"/>
    <property type="project" value="UniProtKB-KW"/>
</dbReference>
<dbReference type="GO" id="GO:0005840">
    <property type="term" value="C:ribosome"/>
    <property type="evidence" value="ECO:0007669"/>
    <property type="project" value="UniProtKB-KW"/>
</dbReference>
<dbReference type="GO" id="GO:0019843">
    <property type="term" value="F:rRNA binding"/>
    <property type="evidence" value="ECO:0007669"/>
    <property type="project" value="UniProtKB-UniRule"/>
</dbReference>
<dbReference type="GO" id="GO:0003735">
    <property type="term" value="F:structural constituent of ribosome"/>
    <property type="evidence" value="ECO:0007669"/>
    <property type="project" value="InterPro"/>
</dbReference>
<dbReference type="GO" id="GO:0000027">
    <property type="term" value="P:ribosomal large subunit assembly"/>
    <property type="evidence" value="ECO:0007669"/>
    <property type="project" value="UniProtKB-UniRule"/>
</dbReference>
<dbReference type="GO" id="GO:0006412">
    <property type="term" value="P:translation"/>
    <property type="evidence" value="ECO:0007669"/>
    <property type="project" value="InterPro"/>
</dbReference>
<dbReference type="CDD" id="cd07026">
    <property type="entry name" value="Ribosomal_L20"/>
    <property type="match status" value="1"/>
</dbReference>
<dbReference type="FunFam" id="1.10.1900.20:FF:000001">
    <property type="entry name" value="50S ribosomal protein L20"/>
    <property type="match status" value="1"/>
</dbReference>
<dbReference type="Gene3D" id="6.10.160.10">
    <property type="match status" value="1"/>
</dbReference>
<dbReference type="Gene3D" id="1.10.1900.20">
    <property type="entry name" value="Ribosomal protein L20"/>
    <property type="match status" value="1"/>
</dbReference>
<dbReference type="HAMAP" id="MF_00382">
    <property type="entry name" value="Ribosomal_bL20"/>
    <property type="match status" value="1"/>
</dbReference>
<dbReference type="InterPro" id="IPR005813">
    <property type="entry name" value="Ribosomal_bL20"/>
</dbReference>
<dbReference type="InterPro" id="IPR049946">
    <property type="entry name" value="RIBOSOMAL_L20_CS"/>
</dbReference>
<dbReference type="InterPro" id="IPR035566">
    <property type="entry name" value="Ribosomal_protein_bL20_C"/>
</dbReference>
<dbReference type="NCBIfam" id="TIGR01032">
    <property type="entry name" value="rplT_bact"/>
    <property type="match status" value="1"/>
</dbReference>
<dbReference type="PANTHER" id="PTHR10986">
    <property type="entry name" value="39S RIBOSOMAL PROTEIN L20"/>
    <property type="match status" value="1"/>
</dbReference>
<dbReference type="Pfam" id="PF00453">
    <property type="entry name" value="Ribosomal_L20"/>
    <property type="match status" value="1"/>
</dbReference>
<dbReference type="PRINTS" id="PR00062">
    <property type="entry name" value="RIBOSOMALL20"/>
</dbReference>
<dbReference type="SUPFAM" id="SSF74731">
    <property type="entry name" value="Ribosomal protein L20"/>
    <property type="match status" value="1"/>
</dbReference>
<dbReference type="PROSITE" id="PS00937">
    <property type="entry name" value="RIBOSOMAL_L20"/>
    <property type="match status" value="1"/>
</dbReference>
<evidence type="ECO:0000255" key="1">
    <source>
        <dbReference type="HAMAP-Rule" id="MF_00382"/>
    </source>
</evidence>
<evidence type="ECO:0000305" key="2"/>
<reference key="1">
    <citation type="journal article" date="2008" name="PLoS Genet.">
        <title>Complete genome sequence of the complex carbohydrate-degrading marine bacterium, Saccharophagus degradans strain 2-40 T.</title>
        <authorList>
            <person name="Weiner R.M."/>
            <person name="Taylor L.E. II"/>
            <person name="Henrissat B."/>
            <person name="Hauser L."/>
            <person name="Land M."/>
            <person name="Coutinho P.M."/>
            <person name="Rancurel C."/>
            <person name="Saunders E.H."/>
            <person name="Longmire A.G."/>
            <person name="Zhang H."/>
            <person name="Bayer E.A."/>
            <person name="Gilbert H.J."/>
            <person name="Larimer F."/>
            <person name="Zhulin I.B."/>
            <person name="Ekborg N.A."/>
            <person name="Lamed R."/>
            <person name="Richardson P.M."/>
            <person name="Borovok I."/>
            <person name="Hutcheson S."/>
        </authorList>
    </citation>
    <scope>NUCLEOTIDE SEQUENCE [LARGE SCALE GENOMIC DNA]</scope>
    <source>
        <strain>2-40 / ATCC 43961 / DSM 17024</strain>
    </source>
</reference>
<keyword id="KW-1185">Reference proteome</keyword>
<keyword id="KW-0687">Ribonucleoprotein</keyword>
<keyword id="KW-0689">Ribosomal protein</keyword>
<keyword id="KW-0694">RNA-binding</keyword>
<keyword id="KW-0699">rRNA-binding</keyword>
<sequence>MARVKRGVVARRRHKKVLKAAKGYYGARSRVFRVAKQAVIKAGQYAYRDRRVKKRNFRALWITRINAQSRAEGLSYSRLIAGLKKASIALDRRVLADLAIHDKTAFAAIVAKAQEALAA</sequence>
<organism>
    <name type="scientific">Saccharophagus degradans (strain 2-40 / ATCC 43961 / DSM 17024)</name>
    <dbReference type="NCBI Taxonomy" id="203122"/>
    <lineage>
        <taxon>Bacteria</taxon>
        <taxon>Pseudomonadati</taxon>
        <taxon>Pseudomonadota</taxon>
        <taxon>Gammaproteobacteria</taxon>
        <taxon>Cellvibrionales</taxon>
        <taxon>Cellvibrionaceae</taxon>
        <taxon>Saccharophagus</taxon>
    </lineage>
</organism>
<comment type="function">
    <text evidence="1">Binds directly to 23S ribosomal RNA and is necessary for the in vitro assembly process of the 50S ribosomal subunit. It is not involved in the protein synthesizing functions of that subunit.</text>
</comment>
<comment type="similarity">
    <text evidence="1">Belongs to the bacterial ribosomal protein bL20 family.</text>
</comment>
<proteinExistence type="inferred from homology"/>
<accession>Q21KD7</accession>
<gene>
    <name evidence="1" type="primary">rplT</name>
    <name type="ordered locus">Sde_1580</name>
</gene>
<feature type="chain" id="PRO_0000243730" description="Large ribosomal subunit protein bL20">
    <location>
        <begin position="1"/>
        <end position="119"/>
    </location>
</feature>
<name>RL20_SACD2</name>
<protein>
    <recommendedName>
        <fullName evidence="1">Large ribosomal subunit protein bL20</fullName>
    </recommendedName>
    <alternativeName>
        <fullName evidence="2">50S ribosomal protein L20</fullName>
    </alternativeName>
</protein>